<name>FEN1_PICGU</name>
<comment type="function">
    <text evidence="1">Structure-specific nuclease with 5'-flap endonuclease and 5'-3' exonuclease activities involved in DNA replication and repair. During DNA replication, cleaves the 5'-overhanging flap structure that is generated by displacement synthesis when DNA polymerase encounters the 5'-end of a downstream Okazaki fragment. It enters the flap from the 5'-end and then tracks to cleave the flap base, leaving a nick for ligation. Also involved in the long patch base excision repair (LP-BER) pathway, by cleaving within the apurinic/apyrimidinic (AP) site-terminated flap. Acts as a genome stabilization factor that prevents flaps from equilibrating into structures that lead to duplications and deletions. Also possesses 5'-3' exonuclease activity on nicked or gapped double-stranded DNA, and exhibits RNase H activity. Also involved in replication and repair of rDNA and in repairing mitochondrial DNA.</text>
</comment>
<comment type="cofactor">
    <cofactor evidence="1">
        <name>Mg(2+)</name>
        <dbReference type="ChEBI" id="CHEBI:18420"/>
    </cofactor>
    <text evidence="1">Binds 2 magnesium ions per subunit. They probably participate in the reaction catalyzed by the enzyme. May bind an additional third magnesium ion after substrate binding.</text>
</comment>
<comment type="subunit">
    <text evidence="1">Interacts with PCNA. Three molecules of FEN1 bind to one PCNA trimer with each molecule binding to one PCNA monomer. PCNA stimulates the nuclease activity without altering cleavage specificity.</text>
</comment>
<comment type="subcellular location">
    <subcellularLocation>
        <location evidence="1">Nucleus</location>
        <location evidence="1">Nucleolus</location>
    </subcellularLocation>
    <subcellularLocation>
        <location evidence="1">Nucleus</location>
        <location evidence="1">Nucleoplasm</location>
    </subcellularLocation>
    <subcellularLocation>
        <location evidence="1">Mitochondrion</location>
    </subcellularLocation>
    <text evidence="1">Resides mostly in the nucleoli and relocalizes to the nucleoplasm upon DNA damage.</text>
</comment>
<comment type="PTM">
    <text evidence="1">Phosphorylated. Phosphorylation upon DNA damage induces relocalization to the nuclear plasma.</text>
</comment>
<comment type="similarity">
    <text evidence="1">Belongs to the XPG/RAD2 endonuclease family. FEN1 subfamily.</text>
</comment>
<comment type="sequence caution" evidence="3">
    <conflict type="erroneous gene model prediction">
        <sequence resource="EMBL-CDS" id="EDK36862"/>
    </conflict>
</comment>
<feature type="chain" id="PRO_0000403592" description="Flap endonuclease 1">
    <location>
        <begin position="1"/>
        <end position="374"/>
    </location>
</feature>
<feature type="region of interest" description="N-domain">
    <location>
        <begin position="1"/>
        <end position="105"/>
    </location>
</feature>
<feature type="region of interest" description="I-domain">
    <location>
        <begin position="123"/>
        <end position="254"/>
    </location>
</feature>
<feature type="region of interest" description="Interaction with PCNA" evidence="1">
    <location>
        <begin position="341"/>
        <end position="349"/>
    </location>
</feature>
<feature type="region of interest" description="Disordered" evidence="2">
    <location>
        <begin position="354"/>
        <end position="374"/>
    </location>
</feature>
<feature type="compositionally biased region" description="Basic and acidic residues" evidence="2">
    <location>
        <begin position="354"/>
        <end position="365"/>
    </location>
</feature>
<feature type="binding site" evidence="1">
    <location>
        <position position="34"/>
    </location>
    <ligand>
        <name>Mg(2+)</name>
        <dbReference type="ChEBI" id="CHEBI:18420"/>
        <label>1</label>
    </ligand>
</feature>
<feature type="binding site" evidence="1">
    <location>
        <position position="47"/>
    </location>
    <ligand>
        <name>DNA</name>
        <dbReference type="ChEBI" id="CHEBI:16991"/>
    </ligand>
</feature>
<feature type="binding site" evidence="1">
    <location>
        <position position="71"/>
    </location>
    <ligand>
        <name>DNA</name>
        <dbReference type="ChEBI" id="CHEBI:16991"/>
    </ligand>
</feature>
<feature type="binding site" evidence="1">
    <location>
        <position position="87"/>
    </location>
    <ligand>
        <name>Mg(2+)</name>
        <dbReference type="ChEBI" id="CHEBI:18420"/>
        <label>1</label>
    </ligand>
</feature>
<feature type="binding site" evidence="1">
    <location>
        <position position="159"/>
    </location>
    <ligand>
        <name>DNA</name>
        <dbReference type="ChEBI" id="CHEBI:16991"/>
    </ligand>
</feature>
<feature type="binding site" evidence="1">
    <location>
        <position position="159"/>
    </location>
    <ligand>
        <name>Mg(2+)</name>
        <dbReference type="ChEBI" id="CHEBI:18420"/>
        <label>1</label>
    </ligand>
</feature>
<feature type="binding site" evidence="1">
    <location>
        <position position="161"/>
    </location>
    <ligand>
        <name>Mg(2+)</name>
        <dbReference type="ChEBI" id="CHEBI:18420"/>
        <label>1</label>
    </ligand>
</feature>
<feature type="binding site" evidence="1">
    <location>
        <position position="180"/>
    </location>
    <ligand>
        <name>Mg(2+)</name>
        <dbReference type="ChEBI" id="CHEBI:18420"/>
        <label>2</label>
    </ligand>
</feature>
<feature type="binding site" evidence="1">
    <location>
        <position position="182"/>
    </location>
    <ligand>
        <name>Mg(2+)</name>
        <dbReference type="ChEBI" id="CHEBI:18420"/>
        <label>2</label>
    </ligand>
</feature>
<feature type="binding site" evidence="1">
    <location>
        <position position="232"/>
    </location>
    <ligand>
        <name>DNA</name>
        <dbReference type="ChEBI" id="CHEBI:16991"/>
    </ligand>
</feature>
<feature type="binding site" evidence="1">
    <location>
        <position position="234"/>
    </location>
    <ligand>
        <name>DNA</name>
        <dbReference type="ChEBI" id="CHEBI:16991"/>
    </ligand>
</feature>
<feature type="binding site" evidence="1">
    <location>
        <position position="234"/>
    </location>
    <ligand>
        <name>Mg(2+)</name>
        <dbReference type="ChEBI" id="CHEBI:18420"/>
        <label>2</label>
    </ligand>
</feature>
<organism>
    <name type="scientific">Meyerozyma guilliermondii (strain ATCC 6260 / CBS 566 / DSM 6381 / JCM 1539 / NBRC 10279 / NRRL Y-324)</name>
    <name type="common">Yeast</name>
    <name type="synonym">Candida guilliermondii</name>
    <dbReference type="NCBI Taxonomy" id="294746"/>
    <lineage>
        <taxon>Eukaryota</taxon>
        <taxon>Fungi</taxon>
        <taxon>Dikarya</taxon>
        <taxon>Ascomycota</taxon>
        <taxon>Saccharomycotina</taxon>
        <taxon>Pichiomycetes</taxon>
        <taxon>Debaryomycetaceae</taxon>
        <taxon>Meyerozyma</taxon>
    </lineage>
</organism>
<protein>
    <recommendedName>
        <fullName evidence="1">Flap endonuclease 1</fullName>
        <shortName evidence="1">FEN-1</shortName>
        <ecNumber evidence="1">3.1.-.-</ecNumber>
    </recommendedName>
    <alternativeName>
        <fullName evidence="1">Flap structure-specific endonuclease 1</fullName>
    </alternativeName>
</protein>
<evidence type="ECO:0000255" key="1">
    <source>
        <dbReference type="HAMAP-Rule" id="MF_03140"/>
    </source>
</evidence>
<evidence type="ECO:0000256" key="2">
    <source>
        <dbReference type="SAM" id="MobiDB-lite"/>
    </source>
</evidence>
<evidence type="ECO:0000305" key="3"/>
<proteinExistence type="inferred from homology"/>
<accession>A5DCF5</accession>
<dbReference type="EC" id="3.1.-.-" evidence="1"/>
<dbReference type="EMBL" id="CH408155">
    <property type="protein sequence ID" value="EDK36862.2"/>
    <property type="status" value="ALT_SEQ"/>
    <property type="molecule type" value="Genomic_DNA"/>
</dbReference>
<dbReference type="RefSeq" id="XP_001487583.1">
    <property type="nucleotide sequence ID" value="XM_001487533.1"/>
</dbReference>
<dbReference type="SMR" id="A5DCF5"/>
<dbReference type="FunCoup" id="A5DCF5">
    <property type="interactions" value="1050"/>
</dbReference>
<dbReference type="STRING" id="294746.A5DCF5"/>
<dbReference type="GeneID" id="5129734"/>
<dbReference type="KEGG" id="pgu:PGUG_00960"/>
<dbReference type="eggNOG" id="KOG2519">
    <property type="taxonomic scope" value="Eukaryota"/>
</dbReference>
<dbReference type="HOGENOM" id="CLU_032444_2_0_1"/>
<dbReference type="InParanoid" id="A5DCF5"/>
<dbReference type="OrthoDB" id="1937206at2759"/>
<dbReference type="Proteomes" id="UP000001997">
    <property type="component" value="Unassembled WGS sequence"/>
</dbReference>
<dbReference type="GO" id="GO:0005739">
    <property type="term" value="C:mitochondrion"/>
    <property type="evidence" value="ECO:0007669"/>
    <property type="project" value="UniProtKB-SubCell"/>
</dbReference>
<dbReference type="GO" id="GO:0005730">
    <property type="term" value="C:nucleolus"/>
    <property type="evidence" value="ECO:0007669"/>
    <property type="project" value="UniProtKB-SubCell"/>
</dbReference>
<dbReference type="GO" id="GO:0005654">
    <property type="term" value="C:nucleoplasm"/>
    <property type="evidence" value="ECO:0007669"/>
    <property type="project" value="UniProtKB-SubCell"/>
</dbReference>
<dbReference type="GO" id="GO:0008409">
    <property type="term" value="F:5'-3' exonuclease activity"/>
    <property type="evidence" value="ECO:0007669"/>
    <property type="project" value="UniProtKB-UniRule"/>
</dbReference>
<dbReference type="GO" id="GO:0017108">
    <property type="term" value="F:5'-flap endonuclease activity"/>
    <property type="evidence" value="ECO:0007669"/>
    <property type="project" value="UniProtKB-UniRule"/>
</dbReference>
<dbReference type="GO" id="GO:0003677">
    <property type="term" value="F:DNA binding"/>
    <property type="evidence" value="ECO:0007669"/>
    <property type="project" value="UniProtKB-UniRule"/>
</dbReference>
<dbReference type="GO" id="GO:0000287">
    <property type="term" value="F:magnesium ion binding"/>
    <property type="evidence" value="ECO:0007669"/>
    <property type="project" value="UniProtKB-UniRule"/>
</dbReference>
<dbReference type="GO" id="GO:0006284">
    <property type="term" value="P:base-excision repair"/>
    <property type="evidence" value="ECO:0007669"/>
    <property type="project" value="UniProtKB-UniRule"/>
</dbReference>
<dbReference type="GO" id="GO:0043137">
    <property type="term" value="P:DNA replication, removal of RNA primer"/>
    <property type="evidence" value="ECO:0007669"/>
    <property type="project" value="UniProtKB-UniRule"/>
</dbReference>
<dbReference type="CDD" id="cd09907">
    <property type="entry name" value="H3TH_FEN1-Euk"/>
    <property type="match status" value="1"/>
</dbReference>
<dbReference type="CDD" id="cd09867">
    <property type="entry name" value="PIN_FEN1"/>
    <property type="match status" value="1"/>
</dbReference>
<dbReference type="FunFam" id="1.10.150.20:FF:000009">
    <property type="entry name" value="Flap endonuclease 1"/>
    <property type="match status" value="1"/>
</dbReference>
<dbReference type="FunFam" id="3.40.50.1010:FF:000003">
    <property type="entry name" value="Flap endonuclease 1"/>
    <property type="match status" value="1"/>
</dbReference>
<dbReference type="Gene3D" id="1.10.150.20">
    <property type="entry name" value="5' to 3' exonuclease, C-terminal subdomain"/>
    <property type="match status" value="1"/>
</dbReference>
<dbReference type="Gene3D" id="3.40.50.1010">
    <property type="entry name" value="5'-nuclease"/>
    <property type="match status" value="1"/>
</dbReference>
<dbReference type="HAMAP" id="MF_00614">
    <property type="entry name" value="Fen"/>
    <property type="match status" value="1"/>
</dbReference>
<dbReference type="InterPro" id="IPR036279">
    <property type="entry name" value="5-3_exonuclease_C_sf"/>
</dbReference>
<dbReference type="InterPro" id="IPR023426">
    <property type="entry name" value="Flap_endonuc"/>
</dbReference>
<dbReference type="InterPro" id="IPR008918">
    <property type="entry name" value="HhH2"/>
</dbReference>
<dbReference type="InterPro" id="IPR029060">
    <property type="entry name" value="PIN-like_dom_sf"/>
</dbReference>
<dbReference type="InterPro" id="IPR006086">
    <property type="entry name" value="XPG-I_dom"/>
</dbReference>
<dbReference type="InterPro" id="IPR006084">
    <property type="entry name" value="XPG/Rad2"/>
</dbReference>
<dbReference type="InterPro" id="IPR019974">
    <property type="entry name" value="XPG_CS"/>
</dbReference>
<dbReference type="InterPro" id="IPR006085">
    <property type="entry name" value="XPG_DNA_repair_N"/>
</dbReference>
<dbReference type="PANTHER" id="PTHR11081:SF9">
    <property type="entry name" value="FLAP ENDONUCLEASE 1"/>
    <property type="match status" value="1"/>
</dbReference>
<dbReference type="PANTHER" id="PTHR11081">
    <property type="entry name" value="FLAP ENDONUCLEASE FAMILY MEMBER"/>
    <property type="match status" value="1"/>
</dbReference>
<dbReference type="Pfam" id="PF00867">
    <property type="entry name" value="XPG_I"/>
    <property type="match status" value="1"/>
</dbReference>
<dbReference type="Pfam" id="PF00752">
    <property type="entry name" value="XPG_N"/>
    <property type="match status" value="1"/>
</dbReference>
<dbReference type="PRINTS" id="PR00853">
    <property type="entry name" value="XPGRADSUPER"/>
</dbReference>
<dbReference type="SMART" id="SM00279">
    <property type="entry name" value="HhH2"/>
    <property type="match status" value="1"/>
</dbReference>
<dbReference type="SMART" id="SM00484">
    <property type="entry name" value="XPGI"/>
    <property type="match status" value="1"/>
</dbReference>
<dbReference type="SMART" id="SM00485">
    <property type="entry name" value="XPGN"/>
    <property type="match status" value="1"/>
</dbReference>
<dbReference type="SUPFAM" id="SSF47807">
    <property type="entry name" value="5' to 3' exonuclease, C-terminal subdomain"/>
    <property type="match status" value="1"/>
</dbReference>
<dbReference type="SUPFAM" id="SSF88723">
    <property type="entry name" value="PIN domain-like"/>
    <property type="match status" value="1"/>
</dbReference>
<dbReference type="PROSITE" id="PS00841">
    <property type="entry name" value="XPG_1"/>
    <property type="match status" value="1"/>
</dbReference>
<dbReference type="PROSITE" id="PS00842">
    <property type="entry name" value="XPG_2"/>
    <property type="match status" value="1"/>
</dbReference>
<reference key="1">
    <citation type="journal article" date="2009" name="Nature">
        <title>Evolution of pathogenicity and sexual reproduction in eight Candida genomes.</title>
        <authorList>
            <person name="Butler G."/>
            <person name="Rasmussen M.D."/>
            <person name="Lin M.F."/>
            <person name="Santos M.A.S."/>
            <person name="Sakthikumar S."/>
            <person name="Munro C.A."/>
            <person name="Rheinbay E."/>
            <person name="Grabherr M."/>
            <person name="Forche A."/>
            <person name="Reedy J.L."/>
            <person name="Agrafioti I."/>
            <person name="Arnaud M.B."/>
            <person name="Bates S."/>
            <person name="Brown A.J.P."/>
            <person name="Brunke S."/>
            <person name="Costanzo M.C."/>
            <person name="Fitzpatrick D.A."/>
            <person name="de Groot P.W.J."/>
            <person name="Harris D."/>
            <person name="Hoyer L.L."/>
            <person name="Hube B."/>
            <person name="Klis F.M."/>
            <person name="Kodira C."/>
            <person name="Lennard N."/>
            <person name="Logue M.E."/>
            <person name="Martin R."/>
            <person name="Neiman A.M."/>
            <person name="Nikolaou E."/>
            <person name="Quail M.A."/>
            <person name="Quinn J."/>
            <person name="Santos M.C."/>
            <person name="Schmitzberger F.F."/>
            <person name="Sherlock G."/>
            <person name="Shah P."/>
            <person name="Silverstein K.A.T."/>
            <person name="Skrzypek M.S."/>
            <person name="Soll D."/>
            <person name="Staggs R."/>
            <person name="Stansfield I."/>
            <person name="Stumpf M.P.H."/>
            <person name="Sudbery P.E."/>
            <person name="Srikantha T."/>
            <person name="Zeng Q."/>
            <person name="Berman J."/>
            <person name="Berriman M."/>
            <person name="Heitman J."/>
            <person name="Gow N.A.R."/>
            <person name="Lorenz M.C."/>
            <person name="Birren B.W."/>
            <person name="Kellis M."/>
            <person name="Cuomo C.A."/>
        </authorList>
    </citation>
    <scope>NUCLEOTIDE SEQUENCE [LARGE SCALE GENOMIC DNA]</scope>
    <source>
        <strain>ATCC 6260 / CBS 566 / DSM 6381 / JCM 1539 / NBRC 10279 / NRRL Y-324</strain>
    </source>
</reference>
<sequence>MGVKGLNQLIKEHAPEAFREFQLKNLFGRKVAIDASMCLYQYLIAVRQSDGQQLTSEDGETTSHLSGMFYRTIRLVENGIKPMYVFDGKPPVLKGGELEKRMIRKKEALKQQEDIKDTATVEEMVRYEKRSVRVTKEQNNEAKKLLELMGIPYVDAPCEAEAQCAELAVAGKVFAAASEDMDTLCYSPPYLLRHLTFAEARKMPIDQIDYKKAMEGLEMDKQTFIDLCILLGCDYCETIKGVGPVTAFKLIKEHGSLDNIVKWIEENPDSTKFKVPENWPYAEARELFLNPDVSPGKEINLKWQEPKVDELVEFMVKQKGFSEDRVRSGAEKLKKGLKGGVQGRLDGFFSVVKTEKRKPEQDKKTKGSKKAKKK</sequence>
<keyword id="KW-0227">DNA damage</keyword>
<keyword id="KW-0234">DNA repair</keyword>
<keyword id="KW-0235">DNA replication</keyword>
<keyword id="KW-0255">Endonuclease</keyword>
<keyword id="KW-0269">Exonuclease</keyword>
<keyword id="KW-0378">Hydrolase</keyword>
<keyword id="KW-0460">Magnesium</keyword>
<keyword id="KW-0479">Metal-binding</keyword>
<keyword id="KW-0496">Mitochondrion</keyword>
<keyword id="KW-0540">Nuclease</keyword>
<keyword id="KW-0539">Nucleus</keyword>
<keyword id="KW-0597">Phosphoprotein</keyword>
<keyword id="KW-1185">Reference proteome</keyword>
<gene>
    <name evidence="1" type="primary">FEN1</name>
    <name type="ORF">PGUG_00960</name>
</gene>